<sequence>MKVSQNGLNLIKEFEGCRLTAYKPVPWEQMYTIGWGHYGVTAGTTWTQAQADSQLEIDINNKYAPMVDAYVKGKANQNEFDALVSLAYNCGNVFVADGWAPFSHAYCASMIPKYRNAGGQVLQGLVRRRQAELNLFNKPVSSNSNQNNQTGGMIKMYLIIGLDNSGKAKHWYVSDGVSVRHVRTIRMLENYQNKWAKLNLPVDTMFIAEIEAEFGRKIDMASGEVK</sequence>
<proteinExistence type="inferred from homology"/>
<accession>P62692</accession>
<accession>P13003</accession>
<accession>Q38298</accession>
<accession>Q38562</accession>
<accession>Q38651</accession>
<organismHost>
    <name type="scientific">Lactococcus</name>
    <name type="common">lactic streptococci</name>
    <dbReference type="NCBI Taxonomy" id="1357"/>
</organismHost>
<name>ENLYS_BPLC2</name>
<feature type="chain" id="PRO_0000218094" description="Endolysin">
    <location>
        <begin position="1"/>
        <end position="226"/>
    </location>
</feature>
<feature type="active site" description="Proton donor/acceptor" evidence="1">
    <location>
        <position position="15"/>
    </location>
</feature>
<gene>
    <name type="primary">L3</name>
</gene>
<dbReference type="EC" id="3.2.1.17" evidence="1"/>
<dbReference type="EMBL" id="Z34528">
    <property type="protein sequence ID" value="CAA84289.1"/>
    <property type="status" value="ALT_INIT"/>
    <property type="molecule type" value="Genomic_DNA"/>
</dbReference>
<dbReference type="EMBL" id="L48605">
    <property type="protein sequence ID" value="AAA92182.1"/>
    <property type="molecule type" value="Genomic_DNA"/>
</dbReference>
<dbReference type="PIR" id="S49014">
    <property type="entry name" value="S49014"/>
</dbReference>
<dbReference type="RefSeq" id="NP_043551.1">
    <property type="nucleotide sequence ID" value="NC_001706.1"/>
</dbReference>
<dbReference type="SMR" id="P62692"/>
<dbReference type="CAZy" id="GH24">
    <property type="family name" value="Glycoside Hydrolase Family 24"/>
</dbReference>
<dbReference type="GeneID" id="1261153"/>
<dbReference type="KEGG" id="vg:1261153"/>
<dbReference type="Proteomes" id="UP000001835">
    <property type="component" value="Genome"/>
</dbReference>
<dbReference type="GO" id="GO:0030430">
    <property type="term" value="C:host cell cytoplasm"/>
    <property type="evidence" value="ECO:0007669"/>
    <property type="project" value="UniProtKB-SubCell"/>
</dbReference>
<dbReference type="GO" id="GO:0003796">
    <property type="term" value="F:lysozyme activity"/>
    <property type="evidence" value="ECO:0007669"/>
    <property type="project" value="UniProtKB-UniRule"/>
</dbReference>
<dbReference type="GO" id="GO:0016998">
    <property type="term" value="P:cell wall macromolecule catabolic process"/>
    <property type="evidence" value="ECO:0007669"/>
    <property type="project" value="InterPro"/>
</dbReference>
<dbReference type="GO" id="GO:0042742">
    <property type="term" value="P:defense response to bacterium"/>
    <property type="evidence" value="ECO:0007669"/>
    <property type="project" value="UniProtKB-KW"/>
</dbReference>
<dbReference type="GO" id="GO:0009253">
    <property type="term" value="P:peptidoglycan catabolic process"/>
    <property type="evidence" value="ECO:0007669"/>
    <property type="project" value="UniProtKB-UniRule"/>
</dbReference>
<dbReference type="GO" id="GO:0044659">
    <property type="term" value="P:viral release from host cell by cytolysis"/>
    <property type="evidence" value="ECO:0007669"/>
    <property type="project" value="UniProtKB-UniRule"/>
</dbReference>
<dbReference type="CDD" id="cd00737">
    <property type="entry name" value="lyz_endolysin_autolysin"/>
    <property type="match status" value="1"/>
</dbReference>
<dbReference type="Gene3D" id="1.10.530.40">
    <property type="match status" value="1"/>
</dbReference>
<dbReference type="HAMAP" id="MF_04110">
    <property type="entry name" value="ENDOLYSIN_T4"/>
    <property type="match status" value="1"/>
</dbReference>
<dbReference type="InterPro" id="IPR051018">
    <property type="entry name" value="Bacteriophage_GH24"/>
</dbReference>
<dbReference type="InterPro" id="IPR033907">
    <property type="entry name" value="Endolysin_autolysin"/>
</dbReference>
<dbReference type="InterPro" id="IPR034690">
    <property type="entry name" value="Endolysin_T4_type"/>
</dbReference>
<dbReference type="InterPro" id="IPR002196">
    <property type="entry name" value="Glyco_hydro_24"/>
</dbReference>
<dbReference type="InterPro" id="IPR023346">
    <property type="entry name" value="Lysozyme-like_dom_sf"/>
</dbReference>
<dbReference type="InterPro" id="IPR023347">
    <property type="entry name" value="Lysozyme_dom_sf"/>
</dbReference>
<dbReference type="PANTHER" id="PTHR38107">
    <property type="match status" value="1"/>
</dbReference>
<dbReference type="PANTHER" id="PTHR38107:SF3">
    <property type="entry name" value="LYSOZYME RRRD-RELATED"/>
    <property type="match status" value="1"/>
</dbReference>
<dbReference type="Pfam" id="PF00959">
    <property type="entry name" value="Phage_lysozyme"/>
    <property type="match status" value="1"/>
</dbReference>
<dbReference type="SUPFAM" id="SSF53955">
    <property type="entry name" value="Lysozyme-like"/>
    <property type="match status" value="1"/>
</dbReference>
<comment type="function">
    <text evidence="1">Endolysin with lysozyme activity that degrades host peptidoglycans and participates with the holin and spanin proteins in the sequential events which lead to the programmed host cell lysis releasing the mature viral particles. Once the holin has permeabilized the host cell membrane, the endolysin can reach the periplasm and break down the peptidoglycan layer.</text>
</comment>
<comment type="catalytic activity">
    <reaction evidence="1">
        <text>Hydrolysis of (1-&gt;4)-beta-linkages between N-acetylmuramic acid and N-acetyl-D-glucosamine residues in a peptidoglycan and between N-acetyl-D-glucosamine residues in chitodextrins.</text>
        <dbReference type="EC" id="3.2.1.17"/>
    </reaction>
</comment>
<comment type="subcellular location">
    <subcellularLocation>
        <location evidence="1">Host cytoplasm</location>
    </subcellularLocation>
    <text evidence="1">The endolysin is cytoplasmic, but can reach the periplasmic space with the help of the holins which disrupt the host cell membrane.</text>
</comment>
<comment type="miscellaneous">
    <text evidence="2">The bacteriophage lysin is a powerful lytic agent with a narrow target specifically for dairy lactic streptococci.</text>
</comment>
<comment type="similarity">
    <text evidence="1">Belongs to the glycosyl hydrolase 24 family.</text>
</comment>
<comment type="caution">
    <text evidence="1">Lacks the conserved Asp active site.</text>
</comment>
<comment type="sequence caution" evidence="2">
    <conflict type="erroneous initiation">
        <sequence resource="EMBL-CDS" id="CAA84289"/>
    </conflict>
</comment>
<keyword id="KW-0929">Antimicrobial</keyword>
<keyword id="KW-0081">Bacteriolytic enzyme</keyword>
<keyword id="KW-0204">Cytolysis</keyword>
<keyword id="KW-0326">Glycosidase</keyword>
<keyword id="KW-0578">Host cell lysis by virus</keyword>
<keyword id="KW-1035">Host cytoplasm</keyword>
<keyword id="KW-0378">Hydrolase</keyword>
<keyword id="KW-1185">Reference proteome</keyword>
<keyword id="KW-1188">Viral release from host cell</keyword>
<evidence type="ECO:0000255" key="1">
    <source>
        <dbReference type="HAMAP-Rule" id="MF_04110"/>
    </source>
</evidence>
<evidence type="ECO:0000305" key="2"/>
<reference key="1">
    <citation type="journal article" date="1993" name="Can. J. Microbiol.">
        <title>Sequence analysis of the lysin gene region of the prolate lactococcal bacteriophage c2.</title>
        <authorList>
            <person name="Ward L.J."/>
            <person name="Beresford T.P."/>
            <person name="Lubbers M.W."/>
            <person name="Jarvis B.D."/>
            <person name="Jarvis A.W."/>
        </authorList>
    </citation>
    <scope>NUCLEOTIDE SEQUENCE [GENOMIC DNA]</scope>
</reference>
<reference key="2">
    <citation type="journal article" date="1995" name="Appl. Environ. Microbiol.">
        <title>Sequencing and analysis of the prolate-headed lactococcal bacteriophage c2 genome and identification of the structural genes.</title>
        <authorList>
            <person name="Lubbers M.W."/>
            <person name="Waterfield N.R."/>
            <person name="Beresford T.P."/>
            <person name="Le Page R.W."/>
            <person name="Jarvis A.W."/>
        </authorList>
    </citation>
    <scope>NUCLEOTIDE SEQUENCE [GENOMIC DNA]</scope>
</reference>
<organism>
    <name type="scientific">Lactococcus phage c2</name>
    <dbReference type="NCBI Taxonomy" id="2681624"/>
    <lineage>
        <taxon>Viruses</taxon>
        <taxon>Duplodnaviria</taxon>
        <taxon>Heunggongvirae</taxon>
        <taxon>Uroviricota</taxon>
        <taxon>Caudoviricetes</taxon>
        <taxon>Ceduovirus</taxon>
        <taxon>Ceduovirus c2</taxon>
    </lineage>
</organism>
<protein>
    <recommendedName>
        <fullName evidence="1">Endolysin</fullName>
        <ecNumber evidence="1">3.2.1.17</ecNumber>
    </recommendedName>
    <alternativeName>
        <fullName evidence="1">Lysis protein</fullName>
    </alternativeName>
    <alternativeName>
        <fullName evidence="1">Lysozyme</fullName>
    </alternativeName>
    <alternativeName>
        <fullName evidence="1">Muramidase</fullName>
    </alternativeName>
</protein>